<protein>
    <recommendedName>
        <fullName evidence="2">Selenate reductase assembly chaperone protein</fullName>
    </recommendedName>
</protein>
<accession>Q9S1G8</accession>
<organism>
    <name type="scientific">Thauera selenatis</name>
    <dbReference type="NCBI Taxonomy" id="33058"/>
    <lineage>
        <taxon>Bacteria</taxon>
        <taxon>Pseudomonadati</taxon>
        <taxon>Pseudomonadota</taxon>
        <taxon>Betaproteobacteria</taxon>
        <taxon>Rhodocyclales</taxon>
        <taxon>Zoogloeaceae</taxon>
        <taxon>Thauera</taxon>
    </lineage>
</organism>
<keyword id="KW-0143">Chaperone</keyword>
<keyword id="KW-0963">Cytoplasm</keyword>
<gene>
    <name evidence="1" type="primary">serD</name>
</gene>
<proteinExistence type="inferred from homology"/>
<name>SERD_THASE</name>
<feature type="chain" id="PRO_0000097691" description="Selenate reductase assembly chaperone protein">
    <location>
        <begin position="1"/>
        <end position="193"/>
    </location>
</feature>
<sequence>MNALIDNPEALASGYLAMAQVFSYPDAGAWSRLTERGLVDPALTHETLEAEYLAAFEMGGGKATVSLYEGQNRPDLGRDGILQELLRFYEFFDAQLSEDDREYPDHLVTELEFLAWLCLQEHAAVRDGRDAEPFRRAARDFLDRHLAAWLPEFRRRLEATDSAYAQYGPALGELVEAHRSRLGEQAPQLGELQ</sequence>
<evidence type="ECO:0000303" key="1">
    <source>
    </source>
</evidence>
<evidence type="ECO:0000305" key="2"/>
<evidence type="ECO:0000305" key="3">
    <source>
    </source>
</evidence>
<reference key="1">
    <citation type="journal article" date="2000" name="DNA Seq.">
        <title>Cloning and sequencing of the genes encoding the periplasmic-cytochrome B-containing selenate reductase of Thauera selenatis.</title>
        <authorList>
            <person name="Krafft T."/>
            <person name="Bowen A."/>
            <person name="Theis F."/>
            <person name="Macy J.M."/>
        </authorList>
    </citation>
    <scope>NUCLEOTIDE SEQUENCE [GENOMIC DNA]</scope>
</reference>
<dbReference type="EMBL" id="AJ007744">
    <property type="protein sequence ID" value="CAB53374.1"/>
    <property type="molecule type" value="Genomic_DNA"/>
</dbReference>
<dbReference type="SMR" id="Q9S1G8"/>
<dbReference type="GO" id="GO:0005737">
    <property type="term" value="C:cytoplasm"/>
    <property type="evidence" value="ECO:0007669"/>
    <property type="project" value="UniProtKB-SubCell"/>
</dbReference>
<dbReference type="Gene3D" id="1.10.3480.10">
    <property type="entry name" value="TorD-like"/>
    <property type="match status" value="1"/>
</dbReference>
<dbReference type="InterPro" id="IPR020945">
    <property type="entry name" value="DMSO/NO3_reduct_chaperone"/>
</dbReference>
<dbReference type="InterPro" id="IPR017843">
    <property type="entry name" value="DMSO_Rdtase_II_chaperone"/>
</dbReference>
<dbReference type="InterPro" id="IPR036411">
    <property type="entry name" value="TorD-like_sf"/>
</dbReference>
<dbReference type="InterPro" id="IPR050289">
    <property type="entry name" value="TorD/DmsD_chaperones"/>
</dbReference>
<dbReference type="NCBIfam" id="TIGR03482">
    <property type="entry name" value="DMSO_red_II_cha"/>
    <property type="match status" value="1"/>
</dbReference>
<dbReference type="PANTHER" id="PTHR34227">
    <property type="entry name" value="CHAPERONE PROTEIN YCDY"/>
    <property type="match status" value="1"/>
</dbReference>
<dbReference type="PANTHER" id="PTHR34227:SF1">
    <property type="entry name" value="DIMETHYL SULFOXIDE REDUCTASE CHAPERONE-RELATED"/>
    <property type="match status" value="1"/>
</dbReference>
<dbReference type="Pfam" id="PF02613">
    <property type="entry name" value="Nitrate_red_del"/>
    <property type="match status" value="1"/>
</dbReference>
<dbReference type="SUPFAM" id="SSF89155">
    <property type="entry name" value="TorD-like"/>
    <property type="match status" value="1"/>
</dbReference>
<comment type="function">
    <text evidence="3">May function as a system-specific chaperone protein essential for the assembly of an active selenate reductase SerABC.</text>
</comment>
<comment type="subcellular location">
    <subcellularLocation>
        <location evidence="3">Cytoplasm</location>
    </subcellularLocation>
</comment>
<comment type="similarity">
    <text evidence="2">Belongs to the type II DMSO reductase enzyme chaperone family.</text>
</comment>